<gene>
    <name evidence="2" type="primary">rnb</name>
    <name type="ordered locus">KPK_3151</name>
</gene>
<feature type="chain" id="PRO_1000135871" description="Exoribonuclease 2">
    <location>
        <begin position="1"/>
        <end position="644"/>
    </location>
</feature>
<feature type="domain" description="RNB" evidence="1">
    <location>
        <begin position="189"/>
        <end position="516"/>
    </location>
</feature>
<feature type="domain" description="S1 motif" evidence="2">
    <location>
        <begin position="561"/>
        <end position="643"/>
    </location>
</feature>
<name>RNB_KLEP3</name>
<keyword id="KW-0963">Cytoplasm</keyword>
<keyword id="KW-0269">Exonuclease</keyword>
<keyword id="KW-0378">Hydrolase</keyword>
<keyword id="KW-0540">Nuclease</keyword>
<keyword id="KW-0694">RNA-binding</keyword>
<comment type="function">
    <text evidence="2">Involved in mRNA degradation. Hydrolyzes single-stranded polyribonucleotides processively in the 3' to 5' direction.</text>
</comment>
<comment type="catalytic activity">
    <reaction evidence="2">
        <text>Exonucleolytic cleavage in the 3'- to 5'-direction to yield nucleoside 5'-phosphates.</text>
        <dbReference type="EC" id="3.1.13.1"/>
    </reaction>
</comment>
<comment type="subcellular location">
    <subcellularLocation>
        <location evidence="2">Cytoplasm</location>
    </subcellularLocation>
</comment>
<comment type="similarity">
    <text evidence="2">Belongs to the RNR ribonuclease family. RNase II subfamily.</text>
</comment>
<proteinExistence type="inferred from homology"/>
<accession>B5XS03</accession>
<evidence type="ECO:0000255" key="1"/>
<evidence type="ECO:0000255" key="2">
    <source>
        <dbReference type="HAMAP-Rule" id="MF_01036"/>
    </source>
</evidence>
<protein>
    <recommendedName>
        <fullName evidence="2">Exoribonuclease 2</fullName>
        <ecNumber evidence="2">3.1.13.1</ecNumber>
    </recommendedName>
    <alternativeName>
        <fullName evidence="2">Exoribonuclease II</fullName>
        <shortName evidence="2">RNase II</shortName>
        <shortName evidence="2">Ribonuclease II</shortName>
    </alternativeName>
</protein>
<reference key="1">
    <citation type="journal article" date="2008" name="PLoS Genet.">
        <title>Complete genome sequence of the N2-fixing broad host range endophyte Klebsiella pneumoniae 342 and virulence predictions verified in mice.</title>
        <authorList>
            <person name="Fouts D.E."/>
            <person name="Tyler H.L."/>
            <person name="DeBoy R.T."/>
            <person name="Daugherty S."/>
            <person name="Ren Q."/>
            <person name="Badger J.H."/>
            <person name="Durkin A.S."/>
            <person name="Huot H."/>
            <person name="Shrivastava S."/>
            <person name="Kothari S."/>
            <person name="Dodson R.J."/>
            <person name="Mohamoud Y."/>
            <person name="Khouri H."/>
            <person name="Roesch L.F.W."/>
            <person name="Krogfelt K.A."/>
            <person name="Struve C."/>
            <person name="Triplett E.W."/>
            <person name="Methe B.A."/>
        </authorList>
    </citation>
    <scope>NUCLEOTIDE SEQUENCE [LARGE SCALE GENOMIC DNA]</scope>
    <source>
        <strain>342</strain>
    </source>
</reference>
<organism>
    <name type="scientific">Klebsiella pneumoniae (strain 342)</name>
    <dbReference type="NCBI Taxonomy" id="507522"/>
    <lineage>
        <taxon>Bacteria</taxon>
        <taxon>Pseudomonadati</taxon>
        <taxon>Pseudomonadota</taxon>
        <taxon>Gammaproteobacteria</taxon>
        <taxon>Enterobacterales</taxon>
        <taxon>Enterobacteriaceae</taxon>
        <taxon>Klebsiella/Raoultella group</taxon>
        <taxon>Klebsiella</taxon>
        <taxon>Klebsiella pneumoniae complex</taxon>
    </lineage>
</organism>
<sequence length="644" mass="72293">MFQDNPLLAQLKQQLHSQTPRAEGVVKGTEKGFGFLEVDAQKSYFIPPPQMKKVMHGDRIVAVIHSEKDRESAEPETLVEPFLTRFVGKVQKKDDRLAIVPDHPLLKDAIPCRAARGVEHDFKQGDWAVAEMRRHPLKGDRGFYAELTQFITFSDDHFVPWWVTLARHNLEKEAPDGVATEMLDEGLTRRDLTALDFVTIDSASTEDMDDALYVESTADGKLLLTVAIADPTAWIAEGSKLDKAAKVRAFTNYLPGFNIPMLPRELSDDLCSLRANEVRPVLACQMTLAADGTIEDNIEFFAATIESKAKLAYDDVSDWLEGRGSWQPGSDAIAQQITLLKDVCQRRSEWRQTHALVFKDRPDYRFVLGEKGEVLDIVAEPRRIANRIVEESMIAANICAARVLRDKLGFGVYNVHTGFDPANTEQLAALLKTHDVHVDPTEVLTLEGFCKLRRELDAQPTGFLDSRIRRFQSFAEISTEPGPHFGLGLEAYATWTSPIRKYGDMINHRLLKAIIKGETIARPQDDATVQMAERRRLNRMAERDVADWLYARFLNDKAGTDTRFAAEILDISRGGMRVRLVDNGAVAFIPAPFLHAVRDELVCSQENGTVQIKGEVVYKVTDVIDVTIAEVRMETRSIIARPAV</sequence>
<dbReference type="EC" id="3.1.13.1" evidence="2"/>
<dbReference type="EMBL" id="CP000964">
    <property type="protein sequence ID" value="ACI09438.1"/>
    <property type="molecule type" value="Genomic_DNA"/>
</dbReference>
<dbReference type="SMR" id="B5XS03"/>
<dbReference type="KEGG" id="kpe:KPK_3151"/>
<dbReference type="HOGENOM" id="CLU_002333_7_3_6"/>
<dbReference type="Proteomes" id="UP000001734">
    <property type="component" value="Chromosome"/>
</dbReference>
<dbReference type="GO" id="GO:0005829">
    <property type="term" value="C:cytosol"/>
    <property type="evidence" value="ECO:0007669"/>
    <property type="project" value="TreeGrafter"/>
</dbReference>
<dbReference type="GO" id="GO:0008859">
    <property type="term" value="F:exoribonuclease II activity"/>
    <property type="evidence" value="ECO:0007669"/>
    <property type="project" value="UniProtKB-UniRule"/>
</dbReference>
<dbReference type="GO" id="GO:0003723">
    <property type="term" value="F:RNA binding"/>
    <property type="evidence" value="ECO:0007669"/>
    <property type="project" value="UniProtKB-KW"/>
</dbReference>
<dbReference type="GO" id="GO:0006402">
    <property type="term" value="P:mRNA catabolic process"/>
    <property type="evidence" value="ECO:0007669"/>
    <property type="project" value="UniProtKB-UniRule"/>
</dbReference>
<dbReference type="FunFam" id="2.40.50.140:FF:000079">
    <property type="entry name" value="Exoribonuclease 2"/>
    <property type="match status" value="1"/>
</dbReference>
<dbReference type="FunFam" id="2.40.50.140:FF:000081">
    <property type="entry name" value="Exoribonuclease 2"/>
    <property type="match status" value="1"/>
</dbReference>
<dbReference type="FunFam" id="2.40.50.640:FF:000001">
    <property type="entry name" value="Exoribonuclease 2"/>
    <property type="match status" value="1"/>
</dbReference>
<dbReference type="Gene3D" id="2.40.50.640">
    <property type="match status" value="1"/>
</dbReference>
<dbReference type="Gene3D" id="2.40.50.140">
    <property type="entry name" value="Nucleic acid-binding proteins"/>
    <property type="match status" value="2"/>
</dbReference>
<dbReference type="HAMAP" id="MF_01036">
    <property type="entry name" value="RNase_II"/>
    <property type="match status" value="1"/>
</dbReference>
<dbReference type="InterPro" id="IPR011129">
    <property type="entry name" value="CSD"/>
</dbReference>
<dbReference type="InterPro" id="IPR012340">
    <property type="entry name" value="NA-bd_OB-fold"/>
</dbReference>
<dbReference type="InterPro" id="IPR013223">
    <property type="entry name" value="RNase_B_OB_dom"/>
</dbReference>
<dbReference type="InterPro" id="IPR011804">
    <property type="entry name" value="RNase_II"/>
</dbReference>
<dbReference type="InterPro" id="IPR001900">
    <property type="entry name" value="RNase_II/R"/>
</dbReference>
<dbReference type="InterPro" id="IPR022966">
    <property type="entry name" value="RNase_II/R_CS"/>
</dbReference>
<dbReference type="InterPro" id="IPR004476">
    <property type="entry name" value="RNase_II/RNase_R"/>
</dbReference>
<dbReference type="InterPro" id="IPR050180">
    <property type="entry name" value="RNR_Ribonuclease"/>
</dbReference>
<dbReference type="InterPro" id="IPR003029">
    <property type="entry name" value="S1_domain"/>
</dbReference>
<dbReference type="NCBIfam" id="TIGR00358">
    <property type="entry name" value="3_prime_RNase"/>
    <property type="match status" value="1"/>
</dbReference>
<dbReference type="NCBIfam" id="NF003455">
    <property type="entry name" value="PRK05054.1"/>
    <property type="match status" value="1"/>
</dbReference>
<dbReference type="NCBIfam" id="TIGR02062">
    <property type="entry name" value="RNase_B"/>
    <property type="match status" value="1"/>
</dbReference>
<dbReference type="PANTHER" id="PTHR23355:SF37">
    <property type="entry name" value="EXORIBONUCLEASE 2"/>
    <property type="match status" value="1"/>
</dbReference>
<dbReference type="PANTHER" id="PTHR23355">
    <property type="entry name" value="RIBONUCLEASE"/>
    <property type="match status" value="1"/>
</dbReference>
<dbReference type="Pfam" id="PF08206">
    <property type="entry name" value="OB_RNB"/>
    <property type="match status" value="1"/>
</dbReference>
<dbReference type="Pfam" id="PF00773">
    <property type="entry name" value="RNB"/>
    <property type="match status" value="1"/>
</dbReference>
<dbReference type="Pfam" id="PF00575">
    <property type="entry name" value="S1"/>
    <property type="match status" value="1"/>
</dbReference>
<dbReference type="SMART" id="SM00357">
    <property type="entry name" value="CSP"/>
    <property type="match status" value="1"/>
</dbReference>
<dbReference type="SMART" id="SM00955">
    <property type="entry name" value="RNB"/>
    <property type="match status" value="1"/>
</dbReference>
<dbReference type="SUPFAM" id="SSF50249">
    <property type="entry name" value="Nucleic acid-binding proteins"/>
    <property type="match status" value="4"/>
</dbReference>
<dbReference type="PROSITE" id="PS01175">
    <property type="entry name" value="RIBONUCLEASE_II"/>
    <property type="match status" value="1"/>
</dbReference>